<comment type="function">
    <text evidence="3">Component of the origin recognition complex (ORC) that binds origins of replication. It has a role in both chromosomal replication and mating type transcriptional silencing. Binds to the ARS consensus sequence (ACS) of origins of replication. This subunit is a candidate for the mediation of ATP-dependent binding of ORC to origins. May also be a substrate targeting component of a cullin-RING-based E3 ubiquitin-protein ligase complex RTT101(MMS1-ORC5).</text>
</comment>
<comment type="subunit">
    <text evidence="3 4">Component of the origin recognition complex (ORC) composed of at least ORC1, ORC2, ORC3, ORC4, ORC5 and ORC6. Interacts with ORC6. Component of a cullin-RING ligase (CRL)-like complex composed of at least the cullin RTT101, a linker protein MMS1, and the potential substrate receptor ORC5. Interacts with RTT101 and MMS1.</text>
</comment>
<comment type="interaction">
    <interactant intactId="EBI-12584">
        <id>P50874</id>
    </interactant>
    <interactant intactId="EBI-38894">
        <id>Q06211</id>
        <label>MMS1</label>
    </interactant>
    <organismsDiffer>false</organismsDiffer>
    <experiments>4</experiments>
</comment>
<comment type="interaction">
    <interactant intactId="EBI-12584">
        <id>P50874</id>
    </interactant>
    <interactant intactId="EBI-12572">
        <id>P32833</id>
        <label>ORC2</label>
    </interactant>
    <organismsDiffer>false</organismsDiffer>
    <experiments>5</experiments>
</comment>
<comment type="interaction">
    <interactant intactId="EBI-12584">
        <id>P50874</id>
    </interactant>
    <interactant intactId="EBI-12580">
        <id>P54791</id>
        <label>ORC4</label>
    </interactant>
    <organismsDiffer>false</organismsDiffer>
    <experiments>10</experiments>
</comment>
<comment type="interaction">
    <interactant intactId="EBI-12584">
        <id>P50874</id>
    </interactant>
    <interactant intactId="EBI-12588">
        <id>P38826</id>
        <label>ORC6</label>
    </interactant>
    <organismsDiffer>false</organismsDiffer>
    <experiments>3</experiments>
</comment>
<comment type="interaction">
    <interactant intactId="EBI-12584">
        <id>P50874</id>
    </interactant>
    <interactant intactId="EBI-25861">
        <id>P47050</id>
        <label>RTT101</label>
    </interactant>
    <organismsDiffer>false</organismsDiffer>
    <experiments>3</experiments>
</comment>
<comment type="subcellular location">
    <subcellularLocation>
        <location>Nucleus</location>
    </subcellularLocation>
</comment>
<comment type="miscellaneous">
    <text evidence="2">Present with 768 molecules/cell in log phase SD medium.</text>
</comment>
<comment type="similarity">
    <text evidence="5">Belongs to the ORC5 family.</text>
</comment>
<proteinExistence type="evidence at protein level"/>
<dbReference type="EMBL" id="U24187">
    <property type="protein sequence ID" value="AAC49122.1"/>
    <property type="molecule type" value="Genomic_DNA"/>
</dbReference>
<dbReference type="EMBL" id="X96722">
    <property type="protein sequence ID" value="CAA65483.1"/>
    <property type="molecule type" value="Genomic_DNA"/>
</dbReference>
<dbReference type="EMBL" id="Z71537">
    <property type="protein sequence ID" value="CAA96168.1"/>
    <property type="molecule type" value="Genomic_DNA"/>
</dbReference>
<dbReference type="EMBL" id="BK006947">
    <property type="protein sequence ID" value="DAA10298.1"/>
    <property type="molecule type" value="Genomic_DNA"/>
</dbReference>
<dbReference type="PIR" id="S61768">
    <property type="entry name" value="S61768"/>
</dbReference>
<dbReference type="RefSeq" id="NP_014138.1">
    <property type="nucleotide sequence ID" value="NM_001183099.1"/>
</dbReference>
<dbReference type="PDB" id="5V8F">
    <property type="method" value="EM"/>
    <property type="resolution" value="3.90 A"/>
    <property type="chains" value="E=1-479"/>
</dbReference>
<dbReference type="PDB" id="5ZR1">
    <property type="method" value="EM"/>
    <property type="resolution" value="3.00 A"/>
    <property type="chains" value="E=1-479"/>
</dbReference>
<dbReference type="PDB" id="6RQC">
    <property type="method" value="EM"/>
    <property type="resolution" value="4.40 A"/>
    <property type="chains" value="E=1-479"/>
</dbReference>
<dbReference type="PDB" id="6WGC">
    <property type="method" value="EM"/>
    <property type="resolution" value="4.30 A"/>
    <property type="chains" value="E=1-479"/>
</dbReference>
<dbReference type="PDB" id="6WGG">
    <property type="method" value="EM"/>
    <property type="resolution" value="8.10 A"/>
    <property type="chains" value="E=1-479"/>
</dbReference>
<dbReference type="PDB" id="6WGI">
    <property type="method" value="EM"/>
    <property type="resolution" value="10.00 A"/>
    <property type="chains" value="E=1-479"/>
</dbReference>
<dbReference type="PDB" id="7MCA">
    <property type="method" value="EM"/>
    <property type="resolution" value="3.60 A"/>
    <property type="chains" value="E=1-479"/>
</dbReference>
<dbReference type="PDB" id="7TJF">
    <property type="method" value="EM"/>
    <property type="resolution" value="2.60 A"/>
    <property type="chains" value="E=1-479"/>
</dbReference>
<dbReference type="PDB" id="7TJH">
    <property type="method" value="EM"/>
    <property type="resolution" value="2.50 A"/>
    <property type="chains" value="E=1-479"/>
</dbReference>
<dbReference type="PDB" id="7TJI">
    <property type="method" value="EM"/>
    <property type="resolution" value="2.70 A"/>
    <property type="chains" value="E=1-479"/>
</dbReference>
<dbReference type="PDB" id="7TJJ">
    <property type="method" value="EM"/>
    <property type="resolution" value="2.70 A"/>
    <property type="chains" value="E=1-479"/>
</dbReference>
<dbReference type="PDB" id="7TJK">
    <property type="method" value="EM"/>
    <property type="resolution" value="2.70 A"/>
    <property type="chains" value="E=1-479"/>
</dbReference>
<dbReference type="PDB" id="9BCX">
    <property type="method" value="EM"/>
    <property type="resolution" value="6.10 A"/>
    <property type="chains" value="F=1-479"/>
</dbReference>
<dbReference type="PDB" id="9GJP">
    <property type="method" value="EM"/>
    <property type="resolution" value="3.40 A"/>
    <property type="chains" value="E=1-479"/>
</dbReference>
<dbReference type="PDB" id="9GJW">
    <property type="method" value="EM"/>
    <property type="resolution" value="3.30 A"/>
    <property type="chains" value="E=1-479"/>
</dbReference>
<dbReference type="PDB" id="9GM5">
    <property type="method" value="EM"/>
    <property type="resolution" value="3.70 A"/>
    <property type="chains" value="E=1-479"/>
</dbReference>
<dbReference type="PDBsum" id="5V8F"/>
<dbReference type="PDBsum" id="5ZR1"/>
<dbReference type="PDBsum" id="6RQC"/>
<dbReference type="PDBsum" id="6WGC"/>
<dbReference type="PDBsum" id="6WGG"/>
<dbReference type="PDBsum" id="6WGI"/>
<dbReference type="PDBsum" id="7MCA"/>
<dbReference type="PDBsum" id="7TJF"/>
<dbReference type="PDBsum" id="7TJH"/>
<dbReference type="PDBsum" id="7TJI"/>
<dbReference type="PDBsum" id="7TJJ"/>
<dbReference type="PDBsum" id="7TJK"/>
<dbReference type="PDBsum" id="9BCX"/>
<dbReference type="PDBsum" id="9GJP"/>
<dbReference type="PDBsum" id="9GJW"/>
<dbReference type="PDBsum" id="9GM5"/>
<dbReference type="EMDB" id="EMD-21662"/>
<dbReference type="EMDB" id="EMD-21665"/>
<dbReference type="EMDB" id="EMD-21666"/>
<dbReference type="EMDB" id="EMD-23755"/>
<dbReference type="EMDB" id="EMD-23818"/>
<dbReference type="EMDB" id="EMD-25924"/>
<dbReference type="EMDB" id="EMD-25925"/>
<dbReference type="EMDB" id="EMD-25926"/>
<dbReference type="EMDB" id="EMD-25927"/>
<dbReference type="EMDB" id="EMD-25928"/>
<dbReference type="EMDB" id="EMD-44441"/>
<dbReference type="EMDB" id="EMD-4980"/>
<dbReference type="EMDB" id="EMD-51401"/>
<dbReference type="EMDB" id="EMD-51407"/>
<dbReference type="EMDB" id="EMD-51441"/>
<dbReference type="EMDB" id="EMD-6941"/>
<dbReference type="EMDB" id="EMD-8540"/>
<dbReference type="SMR" id="P50874"/>
<dbReference type="BioGRID" id="35578">
    <property type="interactions" value="136"/>
</dbReference>
<dbReference type="ComplexPortal" id="CPX-1167">
    <property type="entry name" value="CUL8-MMS1-ORC5 E3 ubiquitin ligase complex"/>
</dbReference>
<dbReference type="ComplexPortal" id="CPX-768">
    <property type="entry name" value="Nuclear origin recognition complex"/>
</dbReference>
<dbReference type="DIP" id="DIP-2288N"/>
<dbReference type="FunCoup" id="P50874">
    <property type="interactions" value="1058"/>
</dbReference>
<dbReference type="IntAct" id="P50874">
    <property type="interactions" value="22"/>
</dbReference>
<dbReference type="MINT" id="P50874"/>
<dbReference type="STRING" id="4932.YNL261W"/>
<dbReference type="iPTMnet" id="P50874"/>
<dbReference type="PaxDb" id="4932-YNL261W"/>
<dbReference type="PeptideAtlas" id="P50874"/>
<dbReference type="TopDownProteomics" id="P50874"/>
<dbReference type="EnsemblFungi" id="YNL261W_mRNA">
    <property type="protein sequence ID" value="YNL261W"/>
    <property type="gene ID" value="YNL261W"/>
</dbReference>
<dbReference type="GeneID" id="855460"/>
<dbReference type="KEGG" id="sce:YNL261W"/>
<dbReference type="AGR" id="SGD:S000005205"/>
<dbReference type="SGD" id="S000005205">
    <property type="gene designation" value="ORC5"/>
</dbReference>
<dbReference type="VEuPathDB" id="FungiDB:YNL261W"/>
<dbReference type="eggNOG" id="KOG2543">
    <property type="taxonomic scope" value="Eukaryota"/>
</dbReference>
<dbReference type="GeneTree" id="ENSGT00390000009380"/>
<dbReference type="HOGENOM" id="CLU_028223_2_1_1"/>
<dbReference type="InParanoid" id="P50874"/>
<dbReference type="OMA" id="AYICSYL"/>
<dbReference type="OrthoDB" id="365981at2759"/>
<dbReference type="BioCyc" id="YEAST:G3O-33257-MONOMER"/>
<dbReference type="Reactome" id="R-SCE-176187">
    <property type="pathway name" value="Activation of ATR in response to replication stress"/>
</dbReference>
<dbReference type="Reactome" id="R-SCE-68616">
    <property type="pathway name" value="Assembly of the ORC complex at the origin of replication"/>
</dbReference>
<dbReference type="Reactome" id="R-SCE-68689">
    <property type="pathway name" value="CDC6 association with the ORC:origin complex"/>
</dbReference>
<dbReference type="Reactome" id="R-SCE-68962">
    <property type="pathway name" value="Activation of the pre-replicative complex"/>
</dbReference>
<dbReference type="PRO" id="PR:P50874"/>
<dbReference type="Proteomes" id="UP000002311">
    <property type="component" value="Chromosome XIV"/>
</dbReference>
<dbReference type="RNAct" id="P50874">
    <property type="molecule type" value="protein"/>
</dbReference>
<dbReference type="GO" id="GO:0035361">
    <property type="term" value="C:Cul8-RING ubiquitin ligase complex"/>
    <property type="evidence" value="ECO:0000303"/>
    <property type="project" value="ComplexPortal"/>
</dbReference>
<dbReference type="GO" id="GO:0031261">
    <property type="term" value="C:DNA replication preinitiation complex"/>
    <property type="evidence" value="ECO:0000314"/>
    <property type="project" value="SGD"/>
</dbReference>
<dbReference type="GO" id="GO:0005664">
    <property type="term" value="C:nuclear origin of replication recognition complex"/>
    <property type="evidence" value="ECO:0000314"/>
    <property type="project" value="SGD"/>
</dbReference>
<dbReference type="GO" id="GO:0005656">
    <property type="term" value="C:nuclear pre-replicative complex"/>
    <property type="evidence" value="ECO:0000314"/>
    <property type="project" value="SGD"/>
</dbReference>
<dbReference type="GO" id="GO:0005654">
    <property type="term" value="C:nucleoplasm"/>
    <property type="evidence" value="ECO:0000304"/>
    <property type="project" value="Reactome"/>
</dbReference>
<dbReference type="GO" id="GO:0005634">
    <property type="term" value="C:nucleus"/>
    <property type="evidence" value="ECO:0000269"/>
    <property type="project" value="ComplexPortal"/>
</dbReference>
<dbReference type="GO" id="GO:0005524">
    <property type="term" value="F:ATP binding"/>
    <property type="evidence" value="ECO:0000315"/>
    <property type="project" value="SGD"/>
</dbReference>
<dbReference type="GO" id="GO:0003688">
    <property type="term" value="F:DNA replication origin binding"/>
    <property type="evidence" value="ECO:0000314"/>
    <property type="project" value="SGD"/>
</dbReference>
<dbReference type="GO" id="GO:0006270">
    <property type="term" value="P:DNA replication initiation"/>
    <property type="evidence" value="ECO:0000315"/>
    <property type="project" value="SGD"/>
</dbReference>
<dbReference type="GO" id="GO:0006267">
    <property type="term" value="P:pre-replicative complex assembly involved in nuclear cell cycle DNA replication"/>
    <property type="evidence" value="ECO:0000314"/>
    <property type="project" value="SGD"/>
</dbReference>
<dbReference type="GO" id="GO:0006275">
    <property type="term" value="P:regulation of DNA replication"/>
    <property type="evidence" value="ECO:0000303"/>
    <property type="project" value="ComplexPortal"/>
</dbReference>
<dbReference type="GO" id="GO:0030466">
    <property type="term" value="P:silent mating-type cassette heterochromatin formation"/>
    <property type="evidence" value="ECO:0000314"/>
    <property type="project" value="SGD"/>
</dbReference>
<dbReference type="Gene3D" id="1.10.8.60">
    <property type="match status" value="1"/>
</dbReference>
<dbReference type="Gene3D" id="3.40.50.300">
    <property type="entry name" value="P-loop containing nucleotide triphosphate hydrolases"/>
    <property type="match status" value="1"/>
</dbReference>
<dbReference type="InterPro" id="IPR041664">
    <property type="entry name" value="AAA_16"/>
</dbReference>
<dbReference type="InterPro" id="IPR020796">
    <property type="entry name" value="ORC5"/>
</dbReference>
<dbReference type="InterPro" id="IPR047088">
    <property type="entry name" value="ORC5_C"/>
</dbReference>
<dbReference type="InterPro" id="IPR048866">
    <property type="entry name" value="ORC5_lid"/>
</dbReference>
<dbReference type="InterPro" id="IPR027417">
    <property type="entry name" value="P-loop_NTPase"/>
</dbReference>
<dbReference type="PANTHER" id="PTHR12705">
    <property type="entry name" value="ORIGIN RECOGNITION COMPLEX SUBUNIT 5"/>
    <property type="match status" value="1"/>
</dbReference>
<dbReference type="PANTHER" id="PTHR12705:SF0">
    <property type="entry name" value="ORIGIN RECOGNITION COMPLEX SUBUNIT 5"/>
    <property type="match status" value="1"/>
</dbReference>
<dbReference type="Pfam" id="PF13191">
    <property type="entry name" value="AAA_16"/>
    <property type="match status" value="1"/>
</dbReference>
<dbReference type="Pfam" id="PF14630">
    <property type="entry name" value="ORC5_C"/>
    <property type="match status" value="1"/>
</dbReference>
<dbReference type="Pfam" id="PF21639">
    <property type="entry name" value="ORC5_lid"/>
    <property type="match status" value="1"/>
</dbReference>
<dbReference type="SUPFAM" id="SSF52540">
    <property type="entry name" value="P-loop containing nucleoside triphosphate hydrolases"/>
    <property type="match status" value="1"/>
</dbReference>
<protein>
    <recommendedName>
        <fullName>Origin recognition complex subunit 5</fullName>
    </recommendedName>
    <alternativeName>
        <fullName>Origin recognition complex 53 kDa subunit</fullName>
    </alternativeName>
</protein>
<organism>
    <name type="scientific">Saccharomyces cerevisiae (strain ATCC 204508 / S288c)</name>
    <name type="common">Baker's yeast</name>
    <dbReference type="NCBI Taxonomy" id="559292"/>
    <lineage>
        <taxon>Eukaryota</taxon>
        <taxon>Fungi</taxon>
        <taxon>Dikarya</taxon>
        <taxon>Ascomycota</taxon>
        <taxon>Saccharomycotina</taxon>
        <taxon>Saccharomycetes</taxon>
        <taxon>Saccharomycetales</taxon>
        <taxon>Saccharomycetaceae</taxon>
        <taxon>Saccharomyces</taxon>
    </lineage>
</organism>
<name>ORC5_YEAST</name>
<reference key="1">
    <citation type="journal article" date="1995" name="Mol. Biol. Cell">
        <title>The origin recognition complex in silencing, cell cycle progression, and DNA replication.</title>
        <authorList>
            <person name="Loo S."/>
            <person name="Fox C.A."/>
            <person name="Rine J."/>
            <person name="Kobayashi R."/>
            <person name="Stillman B."/>
            <person name="Bell S.P."/>
        </authorList>
    </citation>
    <scope>NUCLEOTIDE SEQUENCE [GENOMIC DNA]</scope>
    <scope>PROTEIN SEQUENCE OF 87-102; 111-125; 276-286 AND 416-431</scope>
</reference>
<reference key="2">
    <citation type="journal article" date="1997" name="Yeast">
        <title>Sequence analysis of the 33 kb long region between ORC5 and SUI1 from the left arm of chromosome XIV from Saccharomyces cerevisiae.</title>
        <authorList>
            <person name="Sen-Gupta M."/>
            <person name="Gueldener U."/>
            <person name="Beinhauer J.D."/>
            <person name="Fiedler T.A."/>
            <person name="Hegemann J.H."/>
        </authorList>
    </citation>
    <scope>NUCLEOTIDE SEQUENCE [GENOMIC DNA]</scope>
    <source>
        <strain>ATCC 96604 / S288c / FY1679</strain>
    </source>
</reference>
<reference key="3">
    <citation type="journal article" date="1997" name="Nature">
        <title>The nucleotide sequence of Saccharomyces cerevisiae chromosome XIV and its evolutionary implications.</title>
        <authorList>
            <person name="Philippsen P."/>
            <person name="Kleine K."/>
            <person name="Poehlmann R."/>
            <person name="Duesterhoeft A."/>
            <person name="Hamberg K."/>
            <person name="Hegemann J.H."/>
            <person name="Obermaier B."/>
            <person name="Urrestarazu L.A."/>
            <person name="Aert R."/>
            <person name="Albermann K."/>
            <person name="Altmann R."/>
            <person name="Andre B."/>
            <person name="Baladron V."/>
            <person name="Ballesta J.P.G."/>
            <person name="Becam A.-M."/>
            <person name="Beinhauer J.D."/>
            <person name="Boskovic J."/>
            <person name="Buitrago M.J."/>
            <person name="Bussereau F."/>
            <person name="Coster F."/>
            <person name="Crouzet M."/>
            <person name="D'Angelo M."/>
            <person name="Dal Pero F."/>
            <person name="De Antoni A."/>
            <person name="del Rey F."/>
            <person name="Doignon F."/>
            <person name="Domdey H."/>
            <person name="Dubois E."/>
            <person name="Fiedler T.A."/>
            <person name="Fleig U."/>
            <person name="Floeth M."/>
            <person name="Fritz C."/>
            <person name="Gaillardin C."/>
            <person name="Garcia-Cantalejo J.M."/>
            <person name="Glansdorff N."/>
            <person name="Goffeau A."/>
            <person name="Gueldener U."/>
            <person name="Herbert C.J."/>
            <person name="Heumann K."/>
            <person name="Heuss-Neitzel D."/>
            <person name="Hilbert H."/>
            <person name="Hinni K."/>
            <person name="Iraqui Houssaini I."/>
            <person name="Jacquet M."/>
            <person name="Jimenez A."/>
            <person name="Jonniaux J.-L."/>
            <person name="Karpfinger-Hartl L."/>
            <person name="Lanfranchi G."/>
            <person name="Lepingle A."/>
            <person name="Levesque H."/>
            <person name="Lyck R."/>
            <person name="Maftahi M."/>
            <person name="Mallet L."/>
            <person name="Maurer C.T.C."/>
            <person name="Messenguy F."/>
            <person name="Mewes H.-W."/>
            <person name="Moestl D."/>
            <person name="Nasr F."/>
            <person name="Nicaud J.-M."/>
            <person name="Niedenthal R.K."/>
            <person name="Pandolfo D."/>
            <person name="Pierard A."/>
            <person name="Piravandi E."/>
            <person name="Planta R.J."/>
            <person name="Pohl T.M."/>
            <person name="Purnelle B."/>
            <person name="Rebischung C."/>
            <person name="Remacha M.A."/>
            <person name="Revuelta J.L."/>
            <person name="Rinke M."/>
            <person name="Saiz J.E."/>
            <person name="Sartorello F."/>
            <person name="Scherens B."/>
            <person name="Sen-Gupta M."/>
            <person name="Soler-Mira A."/>
            <person name="Urbanus J.H.M."/>
            <person name="Valle G."/>
            <person name="Van Dyck L."/>
            <person name="Verhasselt P."/>
            <person name="Vierendeels F."/>
            <person name="Vissers S."/>
            <person name="Voet M."/>
            <person name="Volckaert G."/>
            <person name="Wach A."/>
            <person name="Wambutt R."/>
            <person name="Wedler H."/>
            <person name="Zollner A."/>
            <person name="Hani J."/>
        </authorList>
    </citation>
    <scope>NUCLEOTIDE SEQUENCE [LARGE SCALE GENOMIC DNA]</scope>
    <source>
        <strain>ATCC 204508 / S288c</strain>
    </source>
</reference>
<reference key="4">
    <citation type="journal article" date="2014" name="G3 (Bethesda)">
        <title>The reference genome sequence of Saccharomyces cerevisiae: Then and now.</title>
        <authorList>
            <person name="Engel S.R."/>
            <person name="Dietrich F.S."/>
            <person name="Fisk D.G."/>
            <person name="Binkley G."/>
            <person name="Balakrishnan R."/>
            <person name="Costanzo M.C."/>
            <person name="Dwight S.S."/>
            <person name="Hitz B.C."/>
            <person name="Karra K."/>
            <person name="Nash R.S."/>
            <person name="Weng S."/>
            <person name="Wong E.D."/>
            <person name="Lloyd P."/>
            <person name="Skrzypek M.S."/>
            <person name="Miyasato S.R."/>
            <person name="Simison M."/>
            <person name="Cherry J.M."/>
        </authorList>
    </citation>
    <scope>GENOME REANNOTATION</scope>
    <source>
        <strain>ATCC 204508 / S288c</strain>
    </source>
</reference>
<reference key="5">
    <citation type="journal article" date="2003" name="Nature">
        <title>Global analysis of protein expression in yeast.</title>
        <authorList>
            <person name="Ghaemmaghami S."/>
            <person name="Huh W.-K."/>
            <person name="Bower K."/>
            <person name="Howson R.W."/>
            <person name="Belle A."/>
            <person name="Dephoure N."/>
            <person name="O'Shea E.K."/>
            <person name="Weissman J.S."/>
        </authorList>
    </citation>
    <scope>LEVEL OF PROTEIN EXPRESSION [LARGE SCALE ANALYSIS]</scope>
</reference>
<reference key="6">
    <citation type="journal article" date="2007" name="Genes Dev.">
        <title>Orc6 is required for dynamic recruitment of Cdt1 during repeated Mcm2-7 loading.</title>
        <authorList>
            <person name="Chen S."/>
            <person name="de Vries M.A."/>
            <person name="Bell S.P."/>
        </authorList>
    </citation>
    <scope>FUNCTION</scope>
    <scope>INTERACTION WITH ORC6</scope>
</reference>
<reference key="7">
    <citation type="journal article" date="2010" name="J. Biol. Chem.">
        <title>Cul8/Rtt101 forms a variety of protein complexes that regulate DNA damage response and transcriptional silencing.</title>
        <authorList>
            <person name="Mimura S."/>
            <person name="Yamaguchi T."/>
            <person name="Ishii S."/>
            <person name="Noro E."/>
            <person name="Katsura T."/>
            <person name="Obuse C."/>
            <person name="Kamura T."/>
        </authorList>
    </citation>
    <scope>IDENTIFICATION IN A COMPLEX WITH RTT101 AND MMS1</scope>
</reference>
<reference key="8">
    <citation type="journal article" date="2012" name="Proc. Natl. Acad. Sci. U.S.A.">
        <title>N-terminal acetylome analyses and functional insights of the N-terminal acetyltransferase NatB.</title>
        <authorList>
            <person name="Van Damme P."/>
            <person name="Lasa M."/>
            <person name="Polevoda B."/>
            <person name="Gazquez C."/>
            <person name="Elosegui-Artola A."/>
            <person name="Kim D.S."/>
            <person name="De Juan-Pardo E."/>
            <person name="Demeyer K."/>
            <person name="Hole K."/>
            <person name="Larrea E."/>
            <person name="Timmerman E."/>
            <person name="Prieto J."/>
            <person name="Arnesen T."/>
            <person name="Sherman F."/>
            <person name="Gevaert K."/>
            <person name="Aldabe R."/>
        </authorList>
    </citation>
    <scope>IDENTIFICATION BY MASS SPECTROMETRY [LARGE SCALE ANALYSIS]</scope>
</reference>
<keyword id="KW-0002">3D-structure</keyword>
<keyword id="KW-0067">ATP-binding</keyword>
<keyword id="KW-0903">Direct protein sequencing</keyword>
<keyword id="KW-0235">DNA replication</keyword>
<keyword id="KW-0547">Nucleotide-binding</keyword>
<keyword id="KW-0539">Nucleus</keyword>
<keyword id="KW-1185">Reference proteome</keyword>
<sequence length="479" mass="55289">MNVTTPEVAFREYQTNCLASYISADPDITPSNLILQGYSGTGKTYTLKKYFNANPNLHAVWLEPVELVSWKPLLQAIARTVQYKLKTLYPNIPTTDYDPLQVEEPFLLVKTLHNIFVQYESLQEKTCLFLILDGFDSLQDLDAALFNKYIKLNELLPKDSKINIKFIYTMLETSFLQRYSTHCIPTVMFPRYNVDEVSTILVMSRCGELMEDSCLRKRIIEEQITDCTDDQFQNVAANFIHLIVQAFHSYTGNDIFALNDLIDFKWPKYVSRITKENIFEPLALYKSAIKLFLSTDDNLSENGQGESAITTNRDDLENSQTYDLSIISKYLLIASYICSYLEPRYDASIFSRKTRIIQGRAAYGRRKKKEVNPRYLQPSLFAIERLLAIFQAIFPIQGKAESGSLSALREESLMKANIEVFQNLSELHTLKLIATTMNKNIDYLSPKVRWKVNVPWEIIKEISESVHFNISDYFSDIHE</sequence>
<accession>P50874</accession>
<accession>D6W0T2</accession>
<feature type="chain" id="PRO_0000127096" description="Origin recognition complex subunit 5">
    <location>
        <begin position="1"/>
        <end position="479"/>
    </location>
</feature>
<feature type="binding site" evidence="1">
    <location>
        <begin position="37"/>
        <end position="44"/>
    </location>
    <ligand>
        <name>ATP</name>
        <dbReference type="ChEBI" id="CHEBI:30616"/>
    </ligand>
</feature>
<feature type="helix" evidence="8">
    <location>
        <begin position="12"/>
        <end position="21"/>
    </location>
</feature>
<feature type="helix" evidence="8">
    <location>
        <begin position="26"/>
        <end position="28"/>
    </location>
</feature>
<feature type="strand" evidence="8">
    <location>
        <begin position="31"/>
        <end position="37"/>
    </location>
</feature>
<feature type="helix" evidence="8">
    <location>
        <begin position="43"/>
        <end position="53"/>
    </location>
</feature>
<feature type="strand" evidence="8">
    <location>
        <begin position="59"/>
        <end position="62"/>
    </location>
</feature>
<feature type="helix" evidence="8">
    <location>
        <begin position="64"/>
        <end position="66"/>
    </location>
</feature>
<feature type="helix" evidence="8">
    <location>
        <begin position="70"/>
        <end position="88"/>
    </location>
</feature>
<feature type="helix" evidence="8">
    <location>
        <begin position="99"/>
        <end position="101"/>
    </location>
</feature>
<feature type="helix" evidence="8">
    <location>
        <begin position="105"/>
        <end position="116"/>
    </location>
</feature>
<feature type="helix" evidence="8">
    <location>
        <begin position="117"/>
        <end position="119"/>
    </location>
</feature>
<feature type="strand" evidence="8">
    <location>
        <begin position="126"/>
        <end position="134"/>
    </location>
</feature>
<feature type="helix" evidence="8">
    <location>
        <begin position="135"/>
        <end position="137"/>
    </location>
</feature>
<feature type="helix" evidence="8">
    <location>
        <begin position="145"/>
        <end position="150"/>
    </location>
</feature>
<feature type="helix" evidence="8">
    <location>
        <begin position="152"/>
        <end position="154"/>
    </location>
</feature>
<feature type="strand" evidence="8">
    <location>
        <begin position="161"/>
        <end position="170"/>
    </location>
</feature>
<feature type="helix" evidence="8">
    <location>
        <begin position="173"/>
        <end position="177"/>
    </location>
</feature>
<feature type="helix" evidence="8">
    <location>
        <begin position="178"/>
        <end position="182"/>
    </location>
</feature>
<feature type="strand" evidence="8">
    <location>
        <begin position="186"/>
        <end position="189"/>
    </location>
</feature>
<feature type="helix" evidence="8">
    <location>
        <begin position="194"/>
        <end position="210"/>
    </location>
</feature>
<feature type="helix" evidence="8">
    <location>
        <begin position="213"/>
        <end position="221"/>
    </location>
</feature>
<feature type="helix" evidence="8">
    <location>
        <begin position="230"/>
        <end position="251"/>
    </location>
</feature>
<feature type="helix" evidence="8">
    <location>
        <begin position="255"/>
        <end position="270"/>
    </location>
</feature>
<feature type="turn" evidence="8">
    <location>
        <begin position="275"/>
        <end position="277"/>
    </location>
</feature>
<feature type="helix" evidence="8">
    <location>
        <begin position="281"/>
        <end position="287"/>
    </location>
</feature>
<feature type="helix" evidence="8">
    <location>
        <begin position="289"/>
        <end position="292"/>
    </location>
</feature>
<feature type="helix" evidence="8">
    <location>
        <begin position="326"/>
        <end position="340"/>
    </location>
</feature>
<feature type="helix" evidence="8">
    <location>
        <begin position="343"/>
        <end position="346"/>
    </location>
</feature>
<feature type="helix" evidence="8">
    <location>
        <begin position="347"/>
        <end position="350"/>
    </location>
</feature>
<feature type="helix" evidence="8">
    <location>
        <begin position="373"/>
        <end position="375"/>
    </location>
</feature>
<feature type="helix" evidence="8">
    <location>
        <begin position="383"/>
        <end position="393"/>
    </location>
</feature>
<feature type="turn" evidence="7">
    <location>
        <begin position="406"/>
        <end position="410"/>
    </location>
</feature>
<feature type="helix" evidence="8">
    <location>
        <begin position="418"/>
        <end position="429"/>
    </location>
</feature>
<feature type="strand" evidence="8">
    <location>
        <begin position="432"/>
        <end position="436"/>
    </location>
</feature>
<feature type="strand" evidence="9">
    <location>
        <begin position="438"/>
        <end position="440"/>
    </location>
</feature>
<feature type="strand" evidence="6">
    <location>
        <begin position="443"/>
        <end position="447"/>
    </location>
</feature>
<feature type="strand" evidence="8">
    <location>
        <begin position="450"/>
        <end position="452"/>
    </location>
</feature>
<feature type="helix" evidence="8">
    <location>
        <begin position="456"/>
        <end position="465"/>
    </location>
</feature>
<feature type="helix" evidence="8">
    <location>
        <begin position="471"/>
        <end position="473"/>
    </location>
</feature>
<feature type="turn" evidence="6">
    <location>
        <begin position="476"/>
        <end position="478"/>
    </location>
</feature>
<gene>
    <name type="primary">ORC5</name>
    <name type="ordered locus">YNL261W</name>
    <name type="ORF">N0834</name>
</gene>
<evidence type="ECO:0000255" key="1"/>
<evidence type="ECO:0000269" key="2">
    <source>
    </source>
</evidence>
<evidence type="ECO:0000269" key="3">
    <source>
    </source>
</evidence>
<evidence type="ECO:0000269" key="4">
    <source>
    </source>
</evidence>
<evidence type="ECO:0000305" key="5"/>
<evidence type="ECO:0007829" key="6">
    <source>
        <dbReference type="PDB" id="5ZR1"/>
    </source>
</evidence>
<evidence type="ECO:0007829" key="7">
    <source>
        <dbReference type="PDB" id="7TJF"/>
    </source>
</evidence>
<evidence type="ECO:0007829" key="8">
    <source>
        <dbReference type="PDB" id="7TJH"/>
    </source>
</evidence>
<evidence type="ECO:0007829" key="9">
    <source>
        <dbReference type="PDB" id="7TJK"/>
    </source>
</evidence>